<protein>
    <recommendedName>
        <fullName evidence="2">Large ribosomal subunit protein uL5c</fullName>
    </recommendedName>
    <alternativeName>
        <fullName>50S ribosomal protein L5, chloroplastic</fullName>
    </alternativeName>
</protein>
<accession>B2XTU9</accession>
<dbReference type="EMBL" id="EU168191">
    <property type="protein sequence ID" value="ABV70182.1"/>
    <property type="molecule type" value="Genomic_DNA"/>
</dbReference>
<dbReference type="RefSeq" id="YP_001936435.1">
    <property type="nucleotide sequence ID" value="NC_010772.1"/>
</dbReference>
<dbReference type="SMR" id="B2XTU9"/>
<dbReference type="GeneID" id="6335701"/>
<dbReference type="GO" id="GO:0009507">
    <property type="term" value="C:chloroplast"/>
    <property type="evidence" value="ECO:0007669"/>
    <property type="project" value="UniProtKB-SubCell"/>
</dbReference>
<dbReference type="GO" id="GO:1990904">
    <property type="term" value="C:ribonucleoprotein complex"/>
    <property type="evidence" value="ECO:0007669"/>
    <property type="project" value="UniProtKB-KW"/>
</dbReference>
<dbReference type="GO" id="GO:0005840">
    <property type="term" value="C:ribosome"/>
    <property type="evidence" value="ECO:0007669"/>
    <property type="project" value="UniProtKB-KW"/>
</dbReference>
<dbReference type="GO" id="GO:0019843">
    <property type="term" value="F:rRNA binding"/>
    <property type="evidence" value="ECO:0007669"/>
    <property type="project" value="UniProtKB-UniRule"/>
</dbReference>
<dbReference type="GO" id="GO:0003735">
    <property type="term" value="F:structural constituent of ribosome"/>
    <property type="evidence" value="ECO:0007669"/>
    <property type="project" value="InterPro"/>
</dbReference>
<dbReference type="GO" id="GO:0006412">
    <property type="term" value="P:translation"/>
    <property type="evidence" value="ECO:0007669"/>
    <property type="project" value="UniProtKB-UniRule"/>
</dbReference>
<dbReference type="FunFam" id="3.30.1440.10:FF:000001">
    <property type="entry name" value="50S ribosomal protein L5"/>
    <property type="match status" value="1"/>
</dbReference>
<dbReference type="Gene3D" id="3.30.1440.10">
    <property type="match status" value="1"/>
</dbReference>
<dbReference type="HAMAP" id="MF_01333_B">
    <property type="entry name" value="Ribosomal_uL5_B"/>
    <property type="match status" value="1"/>
</dbReference>
<dbReference type="InterPro" id="IPR002132">
    <property type="entry name" value="Ribosomal_uL5"/>
</dbReference>
<dbReference type="InterPro" id="IPR020930">
    <property type="entry name" value="Ribosomal_uL5_bac-type"/>
</dbReference>
<dbReference type="InterPro" id="IPR031309">
    <property type="entry name" value="Ribosomal_uL5_C"/>
</dbReference>
<dbReference type="InterPro" id="IPR020929">
    <property type="entry name" value="Ribosomal_uL5_CS"/>
</dbReference>
<dbReference type="InterPro" id="IPR022803">
    <property type="entry name" value="Ribosomal_uL5_dom_sf"/>
</dbReference>
<dbReference type="InterPro" id="IPR031310">
    <property type="entry name" value="Ribosomal_uL5_N"/>
</dbReference>
<dbReference type="NCBIfam" id="NF000585">
    <property type="entry name" value="PRK00010.1"/>
    <property type="match status" value="1"/>
</dbReference>
<dbReference type="PANTHER" id="PTHR11994">
    <property type="entry name" value="60S RIBOSOMAL PROTEIN L11-RELATED"/>
    <property type="match status" value="1"/>
</dbReference>
<dbReference type="Pfam" id="PF00281">
    <property type="entry name" value="Ribosomal_L5"/>
    <property type="match status" value="1"/>
</dbReference>
<dbReference type="Pfam" id="PF00673">
    <property type="entry name" value="Ribosomal_L5_C"/>
    <property type="match status" value="1"/>
</dbReference>
<dbReference type="PIRSF" id="PIRSF002161">
    <property type="entry name" value="Ribosomal_L5"/>
    <property type="match status" value="1"/>
</dbReference>
<dbReference type="SUPFAM" id="SSF55282">
    <property type="entry name" value="RL5-like"/>
    <property type="match status" value="1"/>
</dbReference>
<dbReference type="PROSITE" id="PS00358">
    <property type="entry name" value="RIBOSOMAL_L5"/>
    <property type="match status" value="1"/>
</dbReference>
<evidence type="ECO:0000250" key="1"/>
<evidence type="ECO:0000305" key="2"/>
<proteinExistence type="inferred from homology"/>
<reference key="1">
    <citation type="journal article" date="2008" name="BMC Genomics">
        <title>Chloroplast genome sequencing analysis of Heterosigma akashiwo CCMP452 (West Atlantic) and NIES293 (West Pacific) strains.</title>
        <authorList>
            <person name="Cattolico R.A."/>
            <person name="Jacobs M.A."/>
            <person name="Zhou Y."/>
            <person name="Chang J."/>
            <person name="Duplessis M."/>
            <person name="Lybrand T."/>
            <person name="McKay J."/>
            <person name="Ong H.C."/>
            <person name="Sims E."/>
            <person name="Rocap G."/>
        </authorList>
    </citation>
    <scope>NUCLEOTIDE SEQUENCE [LARGE SCALE GENOMIC DNA]</scope>
</reference>
<feature type="chain" id="PRO_0000365652" description="Large ribosomal subunit protein uL5c">
    <location>
        <begin position="1"/>
        <end position="181"/>
    </location>
</feature>
<gene>
    <name type="primary">rpl5</name>
    <name type="ordered locus">Heak452_Cp134</name>
</gene>
<geneLocation type="chloroplast"/>
<comment type="function">
    <text evidence="1">Binds 5S rRNA, forms part of the central protuberance of the 50S subunit.</text>
</comment>
<comment type="subunit">
    <text evidence="1">Part of the 50S ribosomal subunit; contacts the 5S rRNA.</text>
</comment>
<comment type="subcellular location">
    <subcellularLocation>
        <location>Plastid</location>
        <location>Chloroplast</location>
    </subcellularLocation>
</comment>
<comment type="similarity">
    <text evidence="2">Belongs to the universal ribosomal protein uL5 family.</text>
</comment>
<keyword id="KW-0150">Chloroplast</keyword>
<keyword id="KW-0934">Plastid</keyword>
<keyword id="KW-0687">Ribonucleoprotein</keyword>
<keyword id="KW-0689">Ribosomal protein</keyword>
<keyword id="KW-0694">RNA-binding</keyword>
<keyword id="KW-0699">rRNA-binding</keyword>
<name>RK5_HETA4</name>
<organism>
    <name type="scientific">Heterosigma akashiwo (strain CCMP452 / OLISTH)</name>
    <dbReference type="NCBI Taxonomy" id="536046"/>
    <lineage>
        <taxon>Eukaryota</taxon>
        <taxon>Sar</taxon>
        <taxon>Stramenopiles</taxon>
        <taxon>Ochrophyta</taxon>
        <taxon>Raphidophyceae</taxon>
        <taxon>Chattonellales</taxon>
        <taxon>Chattonellaceae</taxon>
        <taxon>Heterosigma</taxon>
    </lineage>
</organism>
<sequence length="181" mass="20505">MSQPLKEKYKSEIVPNLIKTFGYKNIHQVPKITKIQINRGLGAAASNNSTLQQTIEEIRIITGQQPIVTMAKKSIAGFKLRENQPLGVTVTLRNTLMFSFLERLINLVLPRVRDFNGLNPNGFDQHGNYNFGLDNQLVFPEISYESVDQQRGFNITIVTTAKTQVEGFNLLQSYGFPFKKN</sequence>